<feature type="chain" id="PRO_1000070222" description="Beta-ketoacyl-[acyl-carrier-protein] synthase III">
    <location>
        <begin position="1"/>
        <end position="329"/>
    </location>
</feature>
<feature type="region of interest" description="ACP-binding" evidence="1">
    <location>
        <begin position="257"/>
        <end position="261"/>
    </location>
</feature>
<feature type="active site" evidence="1">
    <location>
        <position position="123"/>
    </location>
</feature>
<feature type="active site" evidence="1">
    <location>
        <position position="256"/>
    </location>
</feature>
<feature type="active site" evidence="1">
    <location>
        <position position="286"/>
    </location>
</feature>
<name>FABH_BURP1</name>
<gene>
    <name evidence="1" type="primary">fabH</name>
    <name type="ordered locus">BURPS1710b_2907</name>
</gene>
<comment type="function">
    <text evidence="1">Catalyzes the condensation reaction of fatty acid synthesis by the addition to an acyl acceptor of two carbons from malonyl-ACP. Catalyzes the first condensation reaction which initiates fatty acid synthesis and may therefore play a role in governing the total rate of fatty acid production. Possesses both acetoacetyl-ACP synthase and acetyl transacylase activities. Its substrate specificity determines the biosynthesis of branched-chain and/or straight-chain of fatty acids.</text>
</comment>
<comment type="catalytic activity">
    <reaction evidence="1">
        <text>malonyl-[ACP] + acetyl-CoA + H(+) = 3-oxobutanoyl-[ACP] + CO2 + CoA</text>
        <dbReference type="Rhea" id="RHEA:12080"/>
        <dbReference type="Rhea" id="RHEA-COMP:9623"/>
        <dbReference type="Rhea" id="RHEA-COMP:9625"/>
        <dbReference type="ChEBI" id="CHEBI:15378"/>
        <dbReference type="ChEBI" id="CHEBI:16526"/>
        <dbReference type="ChEBI" id="CHEBI:57287"/>
        <dbReference type="ChEBI" id="CHEBI:57288"/>
        <dbReference type="ChEBI" id="CHEBI:78449"/>
        <dbReference type="ChEBI" id="CHEBI:78450"/>
        <dbReference type="EC" id="2.3.1.180"/>
    </reaction>
</comment>
<comment type="pathway">
    <text evidence="1">Lipid metabolism; fatty acid biosynthesis.</text>
</comment>
<comment type="subunit">
    <text evidence="1">Homodimer.</text>
</comment>
<comment type="subcellular location">
    <subcellularLocation>
        <location evidence="1">Cytoplasm</location>
    </subcellularLocation>
</comment>
<comment type="domain">
    <text evidence="1">The last Arg residue of the ACP-binding site is essential for the weak association between ACP/AcpP and FabH.</text>
</comment>
<comment type="similarity">
    <text evidence="1">Belongs to the thiolase-like superfamily. FabH family.</text>
</comment>
<proteinExistence type="inferred from homology"/>
<sequence>MAQSTLYSRVLGTGSYLPPDRVTNQELADRLAKDGIETSDEWIVARTGIRARHFAAPDVTTSDLALVAAQRAIEAADVDPQSIDLIIVATSTPDFVFPSTACLLQNKLGIKNGGAAFDVQAVCSGFAYALATADSFIRTGQHRTALVIGAETFSRILDFKDRTTCVLFGDGAGAVVLSASEEPGILGSALHADGSYSNILCTPGNVNRGVIAGSAFLHMDGQAVFKLAVNVLEKVAVEALSKAELASEQVDWLIPHQANIRIMTSTCRKLGLPQERMIVTVDEHGNTSAASIPLALDVAVRDGRIKRGQHVLIEGVGGGFTWGASVFRF</sequence>
<evidence type="ECO:0000255" key="1">
    <source>
        <dbReference type="HAMAP-Rule" id="MF_01815"/>
    </source>
</evidence>
<reference key="1">
    <citation type="journal article" date="2010" name="Genome Biol. Evol.">
        <title>Continuing evolution of Burkholderia mallei through genome reduction and large-scale rearrangements.</title>
        <authorList>
            <person name="Losada L."/>
            <person name="Ronning C.M."/>
            <person name="DeShazer D."/>
            <person name="Woods D."/>
            <person name="Fedorova N."/>
            <person name="Kim H.S."/>
            <person name="Shabalina S.A."/>
            <person name="Pearson T.R."/>
            <person name="Brinkac L."/>
            <person name="Tan P."/>
            <person name="Nandi T."/>
            <person name="Crabtree J."/>
            <person name="Badger J."/>
            <person name="Beckstrom-Sternberg S."/>
            <person name="Saqib M."/>
            <person name="Schutzer S.E."/>
            <person name="Keim P."/>
            <person name="Nierman W.C."/>
        </authorList>
    </citation>
    <scope>NUCLEOTIDE SEQUENCE [LARGE SCALE GENOMIC DNA]</scope>
    <source>
        <strain>1710b</strain>
    </source>
</reference>
<dbReference type="EC" id="2.3.1.180" evidence="1"/>
<dbReference type="EMBL" id="CP000124">
    <property type="protein sequence ID" value="ABA49489.1"/>
    <property type="molecule type" value="Genomic_DNA"/>
</dbReference>
<dbReference type="RefSeq" id="WP_004524613.1">
    <property type="nucleotide sequence ID" value="NC_007434.1"/>
</dbReference>
<dbReference type="SMR" id="Q3JQ65"/>
<dbReference type="EnsemblBacteria" id="ABA49489">
    <property type="protein sequence ID" value="ABA49489"/>
    <property type="gene ID" value="BURPS1710b_2907"/>
</dbReference>
<dbReference type="KEGG" id="bpm:BURPS1710b_2907"/>
<dbReference type="HOGENOM" id="CLU_039592_3_1_4"/>
<dbReference type="UniPathway" id="UPA00094"/>
<dbReference type="Proteomes" id="UP000002700">
    <property type="component" value="Chromosome I"/>
</dbReference>
<dbReference type="GO" id="GO:0005737">
    <property type="term" value="C:cytoplasm"/>
    <property type="evidence" value="ECO:0007669"/>
    <property type="project" value="UniProtKB-SubCell"/>
</dbReference>
<dbReference type="GO" id="GO:0004315">
    <property type="term" value="F:3-oxoacyl-[acyl-carrier-protein] synthase activity"/>
    <property type="evidence" value="ECO:0007669"/>
    <property type="project" value="InterPro"/>
</dbReference>
<dbReference type="GO" id="GO:0033818">
    <property type="term" value="F:beta-ketoacyl-acyl-carrier-protein synthase III activity"/>
    <property type="evidence" value="ECO:0007669"/>
    <property type="project" value="UniProtKB-UniRule"/>
</dbReference>
<dbReference type="GO" id="GO:0006633">
    <property type="term" value="P:fatty acid biosynthetic process"/>
    <property type="evidence" value="ECO:0007669"/>
    <property type="project" value="UniProtKB-UniRule"/>
</dbReference>
<dbReference type="CDD" id="cd00830">
    <property type="entry name" value="KAS_III"/>
    <property type="match status" value="1"/>
</dbReference>
<dbReference type="FunFam" id="3.40.47.10:FF:000004">
    <property type="entry name" value="3-oxoacyl-[acyl-carrier-protein] synthase 3"/>
    <property type="match status" value="1"/>
</dbReference>
<dbReference type="Gene3D" id="3.40.47.10">
    <property type="match status" value="2"/>
</dbReference>
<dbReference type="HAMAP" id="MF_01815">
    <property type="entry name" value="FabH"/>
    <property type="match status" value="1"/>
</dbReference>
<dbReference type="InterPro" id="IPR013747">
    <property type="entry name" value="ACP_syn_III_C"/>
</dbReference>
<dbReference type="InterPro" id="IPR013751">
    <property type="entry name" value="ACP_syn_III_N"/>
</dbReference>
<dbReference type="InterPro" id="IPR004655">
    <property type="entry name" value="FabH"/>
</dbReference>
<dbReference type="InterPro" id="IPR016039">
    <property type="entry name" value="Thiolase-like"/>
</dbReference>
<dbReference type="NCBIfam" id="TIGR00747">
    <property type="entry name" value="fabH"/>
    <property type="match status" value="1"/>
</dbReference>
<dbReference type="NCBIfam" id="NF006829">
    <property type="entry name" value="PRK09352.1"/>
    <property type="match status" value="1"/>
</dbReference>
<dbReference type="PANTHER" id="PTHR43091">
    <property type="entry name" value="3-OXOACYL-[ACYL-CARRIER-PROTEIN] SYNTHASE"/>
    <property type="match status" value="1"/>
</dbReference>
<dbReference type="PANTHER" id="PTHR43091:SF1">
    <property type="entry name" value="BETA-KETOACYL-[ACYL-CARRIER-PROTEIN] SYNTHASE III, CHLOROPLASTIC"/>
    <property type="match status" value="1"/>
</dbReference>
<dbReference type="Pfam" id="PF08545">
    <property type="entry name" value="ACP_syn_III"/>
    <property type="match status" value="1"/>
</dbReference>
<dbReference type="Pfam" id="PF08541">
    <property type="entry name" value="ACP_syn_III_C"/>
    <property type="match status" value="1"/>
</dbReference>
<dbReference type="SUPFAM" id="SSF53901">
    <property type="entry name" value="Thiolase-like"/>
    <property type="match status" value="1"/>
</dbReference>
<protein>
    <recommendedName>
        <fullName evidence="1">Beta-ketoacyl-[acyl-carrier-protein] synthase III</fullName>
        <shortName evidence="1">Beta-ketoacyl-ACP synthase III</shortName>
        <shortName evidence="1">KAS III</shortName>
        <ecNumber evidence="1">2.3.1.180</ecNumber>
    </recommendedName>
    <alternativeName>
        <fullName evidence="1">3-oxoacyl-[acyl-carrier-protein] synthase 3</fullName>
    </alternativeName>
    <alternativeName>
        <fullName evidence="1">3-oxoacyl-[acyl-carrier-protein] synthase III</fullName>
    </alternativeName>
</protein>
<organism>
    <name type="scientific">Burkholderia pseudomallei (strain 1710b)</name>
    <dbReference type="NCBI Taxonomy" id="320372"/>
    <lineage>
        <taxon>Bacteria</taxon>
        <taxon>Pseudomonadati</taxon>
        <taxon>Pseudomonadota</taxon>
        <taxon>Betaproteobacteria</taxon>
        <taxon>Burkholderiales</taxon>
        <taxon>Burkholderiaceae</taxon>
        <taxon>Burkholderia</taxon>
        <taxon>pseudomallei group</taxon>
    </lineage>
</organism>
<accession>Q3JQ65</accession>
<keyword id="KW-0012">Acyltransferase</keyword>
<keyword id="KW-0963">Cytoplasm</keyword>
<keyword id="KW-0275">Fatty acid biosynthesis</keyword>
<keyword id="KW-0276">Fatty acid metabolism</keyword>
<keyword id="KW-0444">Lipid biosynthesis</keyword>
<keyword id="KW-0443">Lipid metabolism</keyword>
<keyword id="KW-0511">Multifunctional enzyme</keyword>
<keyword id="KW-0808">Transferase</keyword>